<reference key="1">
    <citation type="submission" date="2007-04" db="EMBL/GenBank/DDBJ databases">
        <title>Complete sequence of Pseudomonas mendocina ymp.</title>
        <authorList>
            <consortium name="US DOE Joint Genome Institute"/>
            <person name="Copeland A."/>
            <person name="Lucas S."/>
            <person name="Lapidus A."/>
            <person name="Barry K."/>
            <person name="Glavina del Rio T."/>
            <person name="Dalin E."/>
            <person name="Tice H."/>
            <person name="Pitluck S."/>
            <person name="Kiss H."/>
            <person name="Brettin T."/>
            <person name="Detter J.C."/>
            <person name="Bruce D."/>
            <person name="Han C."/>
            <person name="Schmutz J."/>
            <person name="Larimer F."/>
            <person name="Land M."/>
            <person name="Hauser L."/>
            <person name="Kyrpides N."/>
            <person name="Mikhailova N."/>
            <person name="Hersman L."/>
            <person name="Dubois J."/>
            <person name="Maurice P."/>
            <person name="Richardson P."/>
        </authorList>
    </citation>
    <scope>NUCLEOTIDE SEQUENCE [LARGE SCALE GENOMIC DNA]</scope>
    <source>
        <strain>ymp</strain>
    </source>
</reference>
<evidence type="ECO:0000255" key="1">
    <source>
        <dbReference type="HAMAP-Rule" id="MF_01848"/>
    </source>
</evidence>
<evidence type="ECO:0000256" key="2">
    <source>
        <dbReference type="SAM" id="MobiDB-lite"/>
    </source>
</evidence>
<feature type="chain" id="PRO_0000349931" description="Ribosomal RNA large subunit methyltransferase F">
    <location>
        <begin position="1"/>
        <end position="333"/>
    </location>
</feature>
<feature type="region of interest" description="Disordered" evidence="2">
    <location>
        <begin position="1"/>
        <end position="31"/>
    </location>
</feature>
<feature type="compositionally biased region" description="Basic residues" evidence="2">
    <location>
        <begin position="1"/>
        <end position="10"/>
    </location>
</feature>
<feature type="compositionally biased region" description="Low complexity" evidence="2">
    <location>
        <begin position="12"/>
        <end position="22"/>
    </location>
</feature>
<gene>
    <name evidence="1" type="primary">rlmF</name>
    <name type="ordered locus">Pmen_3535</name>
</gene>
<accession>A4XY67</accession>
<protein>
    <recommendedName>
        <fullName evidence="1">Ribosomal RNA large subunit methyltransferase F</fullName>
        <ecNumber evidence="1">2.1.1.181</ecNumber>
    </recommendedName>
    <alternativeName>
        <fullName evidence="1">23S rRNA mA1618 methyltransferase</fullName>
    </alternativeName>
    <alternativeName>
        <fullName evidence="1">rRNA adenine N-6-methyltransferase</fullName>
    </alternativeName>
</protein>
<comment type="function">
    <text evidence="1">Specifically methylates the adenine in position 1618 of 23S rRNA.</text>
</comment>
<comment type="catalytic activity">
    <reaction evidence="1">
        <text>adenosine(1618) in 23S rRNA + S-adenosyl-L-methionine = N(6)-methyladenosine(1618) in 23S rRNA + S-adenosyl-L-homocysteine + H(+)</text>
        <dbReference type="Rhea" id="RHEA:16497"/>
        <dbReference type="Rhea" id="RHEA-COMP:10229"/>
        <dbReference type="Rhea" id="RHEA-COMP:10231"/>
        <dbReference type="ChEBI" id="CHEBI:15378"/>
        <dbReference type="ChEBI" id="CHEBI:57856"/>
        <dbReference type="ChEBI" id="CHEBI:59789"/>
        <dbReference type="ChEBI" id="CHEBI:74411"/>
        <dbReference type="ChEBI" id="CHEBI:74449"/>
        <dbReference type="EC" id="2.1.1.181"/>
    </reaction>
</comment>
<comment type="subcellular location">
    <subcellularLocation>
        <location evidence="1">Cytoplasm</location>
    </subcellularLocation>
</comment>
<comment type="similarity">
    <text evidence="1">Belongs to the methyltransferase superfamily. METTL16/RlmF family.</text>
</comment>
<organism>
    <name type="scientific">Ectopseudomonas mendocina (strain ymp)</name>
    <name type="common">Pseudomonas mendocina</name>
    <dbReference type="NCBI Taxonomy" id="399739"/>
    <lineage>
        <taxon>Bacteria</taxon>
        <taxon>Pseudomonadati</taxon>
        <taxon>Pseudomonadota</taxon>
        <taxon>Gammaproteobacteria</taxon>
        <taxon>Pseudomonadales</taxon>
        <taxon>Pseudomonadaceae</taxon>
        <taxon>Ectopseudomonas</taxon>
    </lineage>
</organism>
<proteinExistence type="inferred from homology"/>
<keyword id="KW-0963">Cytoplasm</keyword>
<keyword id="KW-0489">Methyltransferase</keyword>
<keyword id="KW-0698">rRNA processing</keyword>
<keyword id="KW-0949">S-adenosyl-L-methionine</keyword>
<keyword id="KW-0808">Transferase</keyword>
<dbReference type="EC" id="2.1.1.181" evidence="1"/>
<dbReference type="EMBL" id="CP000680">
    <property type="protein sequence ID" value="ABP86283.1"/>
    <property type="molecule type" value="Genomic_DNA"/>
</dbReference>
<dbReference type="SMR" id="A4XY67"/>
<dbReference type="STRING" id="399739.Pmen_3535"/>
<dbReference type="KEGG" id="pmy:Pmen_3535"/>
<dbReference type="PATRIC" id="fig|399739.8.peg.3581"/>
<dbReference type="eggNOG" id="COG3129">
    <property type="taxonomic scope" value="Bacteria"/>
</dbReference>
<dbReference type="HOGENOM" id="CLU_027534_3_0_6"/>
<dbReference type="OrthoDB" id="1115728at2"/>
<dbReference type="GO" id="GO:0005737">
    <property type="term" value="C:cytoplasm"/>
    <property type="evidence" value="ECO:0007669"/>
    <property type="project" value="UniProtKB-SubCell"/>
</dbReference>
<dbReference type="GO" id="GO:0052907">
    <property type="term" value="F:23S rRNA (adenine(1618)-N(6))-methyltransferase activity"/>
    <property type="evidence" value="ECO:0007669"/>
    <property type="project" value="UniProtKB-EC"/>
</dbReference>
<dbReference type="GO" id="GO:0070475">
    <property type="term" value="P:rRNA base methylation"/>
    <property type="evidence" value="ECO:0007669"/>
    <property type="project" value="TreeGrafter"/>
</dbReference>
<dbReference type="Gene3D" id="3.40.50.150">
    <property type="entry name" value="Vaccinia Virus protein VP39"/>
    <property type="match status" value="1"/>
</dbReference>
<dbReference type="HAMAP" id="MF_01848">
    <property type="entry name" value="23SrRNA_methyltr_F"/>
    <property type="match status" value="1"/>
</dbReference>
<dbReference type="InterPro" id="IPR010286">
    <property type="entry name" value="METTL16/RlmF"/>
</dbReference>
<dbReference type="InterPro" id="IPR016909">
    <property type="entry name" value="rRNA_lsu_MeTfrase_F"/>
</dbReference>
<dbReference type="InterPro" id="IPR029063">
    <property type="entry name" value="SAM-dependent_MTases_sf"/>
</dbReference>
<dbReference type="NCBIfam" id="NF008725">
    <property type="entry name" value="PRK11727.1"/>
    <property type="match status" value="1"/>
</dbReference>
<dbReference type="PANTHER" id="PTHR13393:SF0">
    <property type="entry name" value="RNA N6-ADENOSINE-METHYLTRANSFERASE METTL16"/>
    <property type="match status" value="1"/>
</dbReference>
<dbReference type="PANTHER" id="PTHR13393">
    <property type="entry name" value="SAM-DEPENDENT METHYLTRANSFERASE"/>
    <property type="match status" value="1"/>
</dbReference>
<dbReference type="Pfam" id="PF05971">
    <property type="entry name" value="Methyltransf_10"/>
    <property type="match status" value="1"/>
</dbReference>
<dbReference type="PIRSF" id="PIRSF029038">
    <property type="entry name" value="Mtase_YbiN_prd"/>
    <property type="match status" value="1"/>
</dbReference>
<dbReference type="SUPFAM" id="SSF53335">
    <property type="entry name" value="S-adenosyl-L-methionine-dependent methyltransferases"/>
    <property type="match status" value="1"/>
</dbReference>
<name>RLMF_ECTM1</name>
<sequence>MPQPPKRPRKPAPAAVKTAPAKGELHPRNRHQGRYDFPALIKVSPELGDFVITNPYGKPSIDFANPAAVKVFNRALLAQYYGIRHWDIPDGYLCPPIPGRADYLHNLADLLATDNDGQIPRGAGIHALDIGVGANCIYPLIGHCEYGWHFIGADIAPAALASARAIVAANPQLAGGIELRQQANAEQIFLGLLQADERVDLTLCNPPFHASADEATRGSTRKWRNLGKLDPRRKLPVLNFGGQAAELWCPGGEAAFLKRMASESAQVAGQVLWFSSLVSKGSNVELLQGWLAKAGAAEVRILGMSQGQKQSRLVAWTFKDGEARGAWRQSRWR</sequence>